<proteinExistence type="inferred from homology"/>
<feature type="chain" id="PRO_0000351384" description="Autoinducer 2 import system permease protein LsrD">
    <location>
        <begin position="1"/>
        <end position="333"/>
    </location>
</feature>
<feature type="transmembrane region" description="Helical" evidence="2">
    <location>
        <begin position="7"/>
        <end position="27"/>
    </location>
</feature>
<feature type="transmembrane region" description="Helical" evidence="2">
    <location>
        <begin position="45"/>
        <end position="65"/>
    </location>
</feature>
<feature type="transmembrane region" description="Helical" evidence="2">
    <location>
        <begin position="67"/>
        <end position="87"/>
    </location>
</feature>
<feature type="transmembrane region" description="Helical" evidence="2">
    <location>
        <begin position="90"/>
        <end position="110"/>
    </location>
</feature>
<feature type="transmembrane region" description="Helical" evidence="2">
    <location>
        <begin position="118"/>
        <end position="138"/>
    </location>
</feature>
<feature type="transmembrane region" description="Helical" evidence="2">
    <location>
        <begin position="162"/>
        <end position="182"/>
    </location>
</feature>
<feature type="transmembrane region" description="Helical" evidence="2">
    <location>
        <begin position="212"/>
        <end position="232"/>
    </location>
</feature>
<feature type="transmembrane region" description="Helical" evidence="2">
    <location>
        <begin position="240"/>
        <end position="260"/>
    </location>
</feature>
<feature type="transmembrane region" description="Helical" evidence="2">
    <location>
        <begin position="261"/>
        <end position="281"/>
    </location>
</feature>
<feature type="transmembrane region" description="Helical" evidence="2">
    <location>
        <begin position="288"/>
        <end position="308"/>
    </location>
</feature>
<organism>
    <name type="scientific">Yersinia pestis bv. Antiqua (strain Nepal516)</name>
    <dbReference type="NCBI Taxonomy" id="377628"/>
    <lineage>
        <taxon>Bacteria</taxon>
        <taxon>Pseudomonadati</taxon>
        <taxon>Pseudomonadota</taxon>
        <taxon>Gammaproteobacteria</taxon>
        <taxon>Enterobacterales</taxon>
        <taxon>Yersiniaceae</taxon>
        <taxon>Yersinia</taxon>
    </lineage>
</organism>
<name>LSRD_YERPN</name>
<accession>Q1CN17</accession>
<accession>C4GNI0</accession>
<keyword id="KW-0997">Cell inner membrane</keyword>
<keyword id="KW-1003">Cell membrane</keyword>
<keyword id="KW-0472">Membrane</keyword>
<keyword id="KW-0812">Transmembrane</keyword>
<keyword id="KW-1133">Transmembrane helix</keyword>
<keyword id="KW-0813">Transport</keyword>
<gene>
    <name type="primary">lsrD</name>
    <name type="ordered locus">YPN_0280</name>
    <name type="ORF">YP516_0277</name>
</gene>
<reference key="1">
    <citation type="journal article" date="2006" name="J. Bacteriol.">
        <title>Complete genome sequence of Yersinia pestis strains Antiqua and Nepal516: evidence of gene reduction in an emerging pathogen.</title>
        <authorList>
            <person name="Chain P.S.G."/>
            <person name="Hu P."/>
            <person name="Malfatti S.A."/>
            <person name="Radnedge L."/>
            <person name="Larimer F."/>
            <person name="Vergez L.M."/>
            <person name="Worsham P."/>
            <person name="Chu M.C."/>
            <person name="Andersen G.L."/>
        </authorList>
    </citation>
    <scope>NUCLEOTIDE SEQUENCE [LARGE SCALE GENOMIC DNA]</scope>
    <source>
        <strain>Nepal516</strain>
    </source>
</reference>
<reference key="2">
    <citation type="submission" date="2009-04" db="EMBL/GenBank/DDBJ databases">
        <title>Yersinia pestis Nepal516A whole genome shotgun sequencing project.</title>
        <authorList>
            <person name="Plunkett G. III"/>
            <person name="Anderson B.D."/>
            <person name="Baumler D.J."/>
            <person name="Burland V."/>
            <person name="Cabot E.L."/>
            <person name="Glasner J.D."/>
            <person name="Mau B."/>
            <person name="Neeno-Eckwall E."/>
            <person name="Perna N.T."/>
            <person name="Munk A.C."/>
            <person name="Tapia R."/>
            <person name="Green L.D."/>
            <person name="Rogers Y.C."/>
            <person name="Detter J.C."/>
            <person name="Bruce D.C."/>
            <person name="Brettin T.S."/>
        </authorList>
    </citation>
    <scope>NUCLEOTIDE SEQUENCE [LARGE SCALE GENOMIC DNA]</scope>
    <source>
        <strain>Nepal516</strain>
    </source>
</reference>
<sequence length="333" mass="35134">MNLYRRYGWELTLAALLVLEILLFGLSNSRMLDINVLLFSTSDFICIGIVALPLTMVIVSGGIDISFGSTIGLCAIFLGIVFQAGVPMSVAIPLTVLVGALCGLINAGLILYTGVNPLVITLGTLYLFGGSALLLSGLSGATGYEGIGGFPAAFTDFANQTLFGLPIPLVIFMLCVLLFWLLMHRTHSGRHVFLIGQSSRVARYSALPIARTLCMLYAMTGVASAISAILLVSYFGSARSDLGASFLMPAITAVVLGGANIYGGSGSILGTALAVLLVGYLQQGLQMIGTPNQISSALSGALLILVVVGRSISLHRHLIYEWLQRRRSRKASA</sequence>
<comment type="function">
    <text evidence="1">Part of the ABC transporter complex LsrABCD involved in autoinducer 2 (AI-2) import. Probably responsible for the translocation of the substrate across the membrane (By similarity).</text>
</comment>
<comment type="subunit">
    <text evidence="1">The complex is composed of two ATP-binding proteins (LsrA), two transmembrane proteins (LsrC and LsrD) and a solute-binding protein (LsrB).</text>
</comment>
<comment type="subcellular location">
    <subcellularLocation>
        <location evidence="1">Cell inner membrane</location>
        <topology evidence="1">Multi-pass membrane protein</topology>
    </subcellularLocation>
</comment>
<comment type="similarity">
    <text evidence="3">Belongs to the binding-protein-dependent transport system permease family. AraH/RbsC subfamily.</text>
</comment>
<evidence type="ECO:0000250" key="1"/>
<evidence type="ECO:0000255" key="2"/>
<evidence type="ECO:0000305" key="3"/>
<dbReference type="EMBL" id="CP000305">
    <property type="protein sequence ID" value="ABG16613.1"/>
    <property type="molecule type" value="Genomic_DNA"/>
</dbReference>
<dbReference type="EMBL" id="ACNQ01000006">
    <property type="protein sequence ID" value="EEO78062.1"/>
    <property type="molecule type" value="Genomic_DNA"/>
</dbReference>
<dbReference type="RefSeq" id="WP_002209190.1">
    <property type="nucleotide sequence ID" value="NZ_ACNQ01000006.1"/>
</dbReference>
<dbReference type="GeneID" id="57974200"/>
<dbReference type="KEGG" id="ypn:YPN_0280"/>
<dbReference type="HOGENOM" id="CLU_028880_0_0_6"/>
<dbReference type="Proteomes" id="UP000008936">
    <property type="component" value="Chromosome"/>
</dbReference>
<dbReference type="GO" id="GO:0005886">
    <property type="term" value="C:plasma membrane"/>
    <property type="evidence" value="ECO:0007669"/>
    <property type="project" value="UniProtKB-SubCell"/>
</dbReference>
<dbReference type="GO" id="GO:0022857">
    <property type="term" value="F:transmembrane transporter activity"/>
    <property type="evidence" value="ECO:0007669"/>
    <property type="project" value="InterPro"/>
</dbReference>
<dbReference type="CDD" id="cd06579">
    <property type="entry name" value="TM_PBP1_transp_AraH_like"/>
    <property type="match status" value="1"/>
</dbReference>
<dbReference type="InterPro" id="IPR001851">
    <property type="entry name" value="ABC_transp_permease"/>
</dbReference>
<dbReference type="NCBIfam" id="NF011612">
    <property type="entry name" value="PRK15038.1"/>
    <property type="match status" value="1"/>
</dbReference>
<dbReference type="PANTHER" id="PTHR32196">
    <property type="entry name" value="ABC TRANSPORTER PERMEASE PROTEIN YPHD-RELATED-RELATED"/>
    <property type="match status" value="1"/>
</dbReference>
<dbReference type="PANTHER" id="PTHR32196:SF71">
    <property type="entry name" value="AUTOINDUCER 2 IMPORT SYSTEM PERMEASE PROTEIN LSRD"/>
    <property type="match status" value="1"/>
</dbReference>
<dbReference type="Pfam" id="PF02653">
    <property type="entry name" value="BPD_transp_2"/>
    <property type="match status" value="1"/>
</dbReference>
<protein>
    <recommendedName>
        <fullName>Autoinducer 2 import system permease protein LsrD</fullName>
        <shortName>AI-2 import system permease protein LsrD</shortName>
    </recommendedName>
</protein>